<feature type="signal peptide" evidence="1">
    <location>
        <begin position="1"/>
        <end position="24"/>
    </location>
</feature>
<feature type="chain" id="PRO_0000011667" description="Glycoprotein hormones alpha chain">
    <location>
        <begin position="25"/>
        <end position="116"/>
    </location>
</feature>
<feature type="glycosylation site" description="N-linked (GlcNAc...) asparagine" evidence="2">
    <location>
        <position position="77"/>
    </location>
</feature>
<feature type="glycosylation site" description="N-linked (GlcNAc...) asparagine" evidence="2">
    <location>
        <position position="102"/>
    </location>
</feature>
<feature type="disulfide bond" evidence="2">
    <location>
        <begin position="32"/>
        <end position="56"/>
    </location>
</feature>
<feature type="disulfide bond" evidence="2">
    <location>
        <begin position="35"/>
        <end position="85"/>
    </location>
</feature>
<feature type="disulfide bond" evidence="2">
    <location>
        <begin position="53"/>
        <end position="106"/>
    </location>
</feature>
<feature type="disulfide bond" evidence="2">
    <location>
        <begin position="57"/>
        <end position="108"/>
    </location>
</feature>
<feature type="disulfide bond" evidence="2">
    <location>
        <begin position="84"/>
        <end position="111"/>
    </location>
</feature>
<gene>
    <name type="primary">cga</name>
</gene>
<sequence length="116" mass="13089">MILILKYTGATIILLSVLIEIGQLFPNNDFGCEECKLKENNIFSKPGAPVYQCMGCCFSRAYPTPLRSEKTMLVPKNITSEATCCVAKEVKRVIVNDVKLMNHTDCHCSTCYYHKF</sequence>
<proteinExistence type="inferred from homology"/>
<name>GLHA_ICTPU</name>
<protein>
    <recommendedName>
        <fullName>Glycoprotein hormones alpha chain</fullName>
    </recommendedName>
    <alternativeName>
        <fullName>GTH-alpha</fullName>
    </alternativeName>
    <alternativeName>
        <fullName>Gonadotropin alpha chain</fullName>
    </alternativeName>
</protein>
<organism>
    <name type="scientific">Ictalurus punctatus</name>
    <name type="common">Channel catfish</name>
    <name type="synonym">Silurus punctatus</name>
    <dbReference type="NCBI Taxonomy" id="7998"/>
    <lineage>
        <taxon>Eukaryota</taxon>
        <taxon>Metazoa</taxon>
        <taxon>Chordata</taxon>
        <taxon>Craniata</taxon>
        <taxon>Vertebrata</taxon>
        <taxon>Euteleostomi</taxon>
        <taxon>Actinopterygii</taxon>
        <taxon>Neopterygii</taxon>
        <taxon>Teleostei</taxon>
        <taxon>Ostariophysi</taxon>
        <taxon>Siluriformes</taxon>
        <taxon>Ictaluridae</taxon>
        <taxon>Ictalurus</taxon>
    </lineage>
</organism>
<evidence type="ECO:0000250" key="1"/>
<evidence type="ECO:0000250" key="2">
    <source>
        <dbReference type="UniProtKB" id="P01215"/>
    </source>
</evidence>
<evidence type="ECO:0000250" key="3">
    <source>
        <dbReference type="UniProtKB" id="P37204"/>
    </source>
</evidence>
<evidence type="ECO:0000305" key="4"/>
<accession>Q9YGP3</accession>
<dbReference type="EMBL" id="AF112190">
    <property type="protein sequence ID" value="AAD18004.1"/>
    <property type="molecule type" value="mRNA"/>
</dbReference>
<dbReference type="RefSeq" id="NP_001187007.1">
    <property type="nucleotide sequence ID" value="NM_001200078.1"/>
</dbReference>
<dbReference type="SMR" id="Q9YGP3"/>
<dbReference type="STRING" id="7998.ENSIPUP00000008246"/>
<dbReference type="GlyCosmos" id="Q9YGP3">
    <property type="glycosylation" value="2 sites, No reported glycans"/>
</dbReference>
<dbReference type="GeneID" id="100304479"/>
<dbReference type="KEGG" id="ipu:100304479"/>
<dbReference type="CTD" id="1081"/>
<dbReference type="OrthoDB" id="9852859at2759"/>
<dbReference type="Proteomes" id="UP000221080">
    <property type="component" value="Chromosome 9"/>
</dbReference>
<dbReference type="GO" id="GO:0005615">
    <property type="term" value="C:extracellular space"/>
    <property type="evidence" value="ECO:0000250"/>
    <property type="project" value="UniProtKB"/>
</dbReference>
<dbReference type="GO" id="GO:0016914">
    <property type="term" value="C:follicle-stimulating hormone complex"/>
    <property type="evidence" value="ECO:0000250"/>
    <property type="project" value="UniProtKB"/>
</dbReference>
<dbReference type="GO" id="GO:0016913">
    <property type="term" value="F:follicle-stimulating hormone activity"/>
    <property type="evidence" value="ECO:0000250"/>
    <property type="project" value="UniProtKB"/>
</dbReference>
<dbReference type="GO" id="GO:0046982">
    <property type="term" value="F:protein heterodimerization activity"/>
    <property type="evidence" value="ECO:0000353"/>
    <property type="project" value="AgBase"/>
</dbReference>
<dbReference type="GO" id="GO:0007186">
    <property type="term" value="P:G protein-coupled receptor signaling pathway"/>
    <property type="evidence" value="ECO:0000250"/>
    <property type="project" value="UniProtKB"/>
</dbReference>
<dbReference type="GO" id="GO:0010893">
    <property type="term" value="P:positive regulation of steroid biosynthetic process"/>
    <property type="evidence" value="ECO:0000250"/>
    <property type="project" value="UniProtKB"/>
</dbReference>
<dbReference type="GO" id="GO:0010469">
    <property type="term" value="P:regulation of signaling receptor activity"/>
    <property type="evidence" value="ECO:0000250"/>
    <property type="project" value="UniProtKB"/>
</dbReference>
<dbReference type="GO" id="GO:0006590">
    <property type="term" value="P:thyroid hormone generation"/>
    <property type="evidence" value="ECO:0007669"/>
    <property type="project" value="TreeGrafter"/>
</dbReference>
<dbReference type="FunFam" id="2.10.90.10:FF:000011">
    <property type="entry name" value="Glycoprotein hormones alpha chain"/>
    <property type="match status" value="1"/>
</dbReference>
<dbReference type="Gene3D" id="2.10.90.10">
    <property type="entry name" value="Cystine-knot cytokines"/>
    <property type="match status" value="1"/>
</dbReference>
<dbReference type="InterPro" id="IPR029034">
    <property type="entry name" value="Cystine-knot_cytokine"/>
</dbReference>
<dbReference type="InterPro" id="IPR000476">
    <property type="entry name" value="Glyco_hormone"/>
</dbReference>
<dbReference type="PANTHER" id="PTHR11509">
    <property type="entry name" value="GLYCOPROTEIN HORMONE ALPHA CHAIN"/>
    <property type="match status" value="1"/>
</dbReference>
<dbReference type="PANTHER" id="PTHR11509:SF0">
    <property type="entry name" value="GLYCOPROTEIN HORMONES ALPHA CHAIN"/>
    <property type="match status" value="1"/>
</dbReference>
<dbReference type="Pfam" id="PF00236">
    <property type="entry name" value="Hormone_6"/>
    <property type="match status" value="1"/>
</dbReference>
<dbReference type="PRINTS" id="PR00274">
    <property type="entry name" value="GLYCOHORMONE"/>
</dbReference>
<dbReference type="SMART" id="SM00067">
    <property type="entry name" value="GHA"/>
    <property type="match status" value="1"/>
</dbReference>
<dbReference type="SUPFAM" id="SSF57501">
    <property type="entry name" value="Cystine-knot cytokines"/>
    <property type="match status" value="1"/>
</dbReference>
<dbReference type="PROSITE" id="PS00779">
    <property type="entry name" value="GLYCO_HORMONE_ALPHA_1"/>
    <property type="match status" value="1"/>
</dbReference>
<dbReference type="PROSITE" id="PS00780">
    <property type="entry name" value="GLYCO_HORMONE_ALPHA_2"/>
    <property type="match status" value="1"/>
</dbReference>
<dbReference type="PROSITE" id="PS50277">
    <property type="entry name" value="GLYCO_HORMONE_ALPHA_3"/>
    <property type="match status" value="1"/>
</dbReference>
<comment type="function">
    <text evidence="3">Shared alpha chain of heterodimeric glycoprotein hormones. These hormones bind specific receptors on target cells that in turn activate downstream signaling pathways. Involved in gametogenesis and steroidogenesis.</text>
</comment>
<comment type="subunit">
    <text evidence="3">Heterodimer. Glycoprotein hormones are heterodimers composed of a common alpha chain described here and a unique beta chain which confers their biological specificity to the different hormones.</text>
</comment>
<comment type="subcellular location">
    <subcellularLocation>
        <location evidence="3">Secreted</location>
    </subcellularLocation>
</comment>
<comment type="similarity">
    <text evidence="4">Belongs to the glycoprotein hormones subunit alpha family.</text>
</comment>
<reference key="1">
    <citation type="journal article" date="1997" name="Mol. Mar. Biol. Biotechnol.">
        <title>Gonadotropin alpha-subunit glycoprotein from channel catfish (Ictalurus punctatus) and its expression during hormone-induced ovulation.</title>
        <authorList>
            <person name="Liu Z."/>
            <person name="Li P."/>
            <person name="Argue B.J."/>
            <person name="Dunham R.A."/>
        </authorList>
    </citation>
    <scope>NUCLEOTIDE SEQUENCE [MRNA]</scope>
    <source>
        <strain>Kansas</strain>
    </source>
</reference>
<keyword id="KW-1015">Disulfide bond</keyword>
<keyword id="KW-0325">Glycoprotein</keyword>
<keyword id="KW-0372">Hormone</keyword>
<keyword id="KW-0964">Secreted</keyword>
<keyword id="KW-0732">Signal</keyword>